<accession>Q3KKA1</accession>
<gene>
    <name evidence="1" type="primary">znuC</name>
    <name type="ordered locus">Pfl01_0061</name>
</gene>
<feature type="chain" id="PRO_0000281528" description="Zinc import ATP-binding protein ZnuC">
    <location>
        <begin position="1"/>
        <end position="261"/>
    </location>
</feature>
<feature type="domain" description="ABC transporter" evidence="1">
    <location>
        <begin position="6"/>
        <end position="221"/>
    </location>
</feature>
<feature type="binding site" evidence="1">
    <location>
        <begin position="38"/>
        <end position="45"/>
    </location>
    <ligand>
        <name>ATP</name>
        <dbReference type="ChEBI" id="CHEBI:30616"/>
    </ligand>
</feature>
<name>ZNUC_PSEPF</name>
<protein>
    <recommendedName>
        <fullName evidence="1">Zinc import ATP-binding protein ZnuC</fullName>
        <ecNumber evidence="1">7.2.2.20</ecNumber>
    </recommendedName>
</protein>
<reference key="1">
    <citation type="journal article" date="2009" name="Genome Biol.">
        <title>Genomic and genetic analyses of diversity and plant interactions of Pseudomonas fluorescens.</title>
        <authorList>
            <person name="Silby M.W."/>
            <person name="Cerdeno-Tarraga A.M."/>
            <person name="Vernikos G.S."/>
            <person name="Giddens S.R."/>
            <person name="Jackson R.W."/>
            <person name="Preston G.M."/>
            <person name="Zhang X.-X."/>
            <person name="Moon C.D."/>
            <person name="Gehrig S.M."/>
            <person name="Godfrey S.A.C."/>
            <person name="Knight C.G."/>
            <person name="Malone J.G."/>
            <person name="Robinson Z."/>
            <person name="Spiers A.J."/>
            <person name="Harris S."/>
            <person name="Challis G.L."/>
            <person name="Yaxley A.M."/>
            <person name="Harris D."/>
            <person name="Seeger K."/>
            <person name="Murphy L."/>
            <person name="Rutter S."/>
            <person name="Squares R."/>
            <person name="Quail M.A."/>
            <person name="Saunders E."/>
            <person name="Mavromatis K."/>
            <person name="Brettin T.S."/>
            <person name="Bentley S.D."/>
            <person name="Hothersall J."/>
            <person name="Stephens E."/>
            <person name="Thomas C.M."/>
            <person name="Parkhill J."/>
            <person name="Levy S.B."/>
            <person name="Rainey P.B."/>
            <person name="Thomson N.R."/>
        </authorList>
    </citation>
    <scope>NUCLEOTIDE SEQUENCE [LARGE SCALE GENOMIC DNA]</scope>
    <source>
        <strain>Pf0-1</strain>
    </source>
</reference>
<sequence>MSDALIRLEKVAVRFAGQNVLDNIHLSVEPGQIVTLIGPNGAGKTTLVRAVLGLLKPDSGSVWRKPKLRVGYMPQKLHVDPTLPLSVLRFLRLVPGVDRPRALAALKEVGAEHVIDSPVQSVSGGEMQRVLLARALLREPELLVLDEPVQGVDVAGQAELYSLITRLRDRHGCGVLMVSHDLHLVMSTTDQVVCLNRHVCCSGHPEQVSGDPAFVELFGNNAPSLAIYHHHHDHAHDLHGSVVKGPVTGQPHVHGDSCKHG</sequence>
<organism>
    <name type="scientific">Pseudomonas fluorescens (strain Pf0-1)</name>
    <dbReference type="NCBI Taxonomy" id="205922"/>
    <lineage>
        <taxon>Bacteria</taxon>
        <taxon>Pseudomonadati</taxon>
        <taxon>Pseudomonadota</taxon>
        <taxon>Gammaproteobacteria</taxon>
        <taxon>Pseudomonadales</taxon>
        <taxon>Pseudomonadaceae</taxon>
        <taxon>Pseudomonas</taxon>
    </lineage>
</organism>
<proteinExistence type="inferred from homology"/>
<dbReference type="EC" id="7.2.2.20" evidence="1"/>
<dbReference type="EMBL" id="CP000094">
    <property type="protein sequence ID" value="ABA71805.1"/>
    <property type="molecule type" value="Genomic_DNA"/>
</dbReference>
<dbReference type="RefSeq" id="WP_011331784.1">
    <property type="nucleotide sequence ID" value="NC_007492.2"/>
</dbReference>
<dbReference type="SMR" id="Q3KKA1"/>
<dbReference type="KEGG" id="pfo:Pfl01_0061"/>
<dbReference type="eggNOG" id="COG1121">
    <property type="taxonomic scope" value="Bacteria"/>
</dbReference>
<dbReference type="HOGENOM" id="CLU_000604_1_11_6"/>
<dbReference type="Proteomes" id="UP000002704">
    <property type="component" value="Chromosome"/>
</dbReference>
<dbReference type="GO" id="GO:0005886">
    <property type="term" value="C:plasma membrane"/>
    <property type="evidence" value="ECO:0007669"/>
    <property type="project" value="UniProtKB-SubCell"/>
</dbReference>
<dbReference type="GO" id="GO:0015633">
    <property type="term" value="F:ABC-type zinc transporter activity"/>
    <property type="evidence" value="ECO:0007669"/>
    <property type="project" value="UniProtKB-EC"/>
</dbReference>
<dbReference type="GO" id="GO:0005524">
    <property type="term" value="F:ATP binding"/>
    <property type="evidence" value="ECO:0007669"/>
    <property type="project" value="UniProtKB-KW"/>
</dbReference>
<dbReference type="GO" id="GO:0016887">
    <property type="term" value="F:ATP hydrolysis activity"/>
    <property type="evidence" value="ECO:0007669"/>
    <property type="project" value="InterPro"/>
</dbReference>
<dbReference type="GO" id="GO:0010043">
    <property type="term" value="P:response to zinc ion"/>
    <property type="evidence" value="ECO:0007669"/>
    <property type="project" value="TreeGrafter"/>
</dbReference>
<dbReference type="CDD" id="cd03235">
    <property type="entry name" value="ABC_Metallic_Cations"/>
    <property type="match status" value="1"/>
</dbReference>
<dbReference type="FunFam" id="3.40.50.300:FF:000392">
    <property type="entry name" value="Zinc import ATP-binding protein ZnuC"/>
    <property type="match status" value="1"/>
</dbReference>
<dbReference type="Gene3D" id="3.40.50.300">
    <property type="entry name" value="P-loop containing nucleotide triphosphate hydrolases"/>
    <property type="match status" value="1"/>
</dbReference>
<dbReference type="InterPro" id="IPR003593">
    <property type="entry name" value="AAA+_ATPase"/>
</dbReference>
<dbReference type="InterPro" id="IPR003439">
    <property type="entry name" value="ABC_transporter-like_ATP-bd"/>
</dbReference>
<dbReference type="InterPro" id="IPR017871">
    <property type="entry name" value="ABC_transporter-like_CS"/>
</dbReference>
<dbReference type="InterPro" id="IPR050153">
    <property type="entry name" value="Metal_Ion_Import_ABC"/>
</dbReference>
<dbReference type="InterPro" id="IPR027417">
    <property type="entry name" value="P-loop_NTPase"/>
</dbReference>
<dbReference type="NCBIfam" id="NF007090">
    <property type="entry name" value="PRK09544.1"/>
    <property type="match status" value="1"/>
</dbReference>
<dbReference type="PANTHER" id="PTHR42734">
    <property type="entry name" value="METAL TRANSPORT SYSTEM ATP-BINDING PROTEIN TM_0124-RELATED"/>
    <property type="match status" value="1"/>
</dbReference>
<dbReference type="PANTHER" id="PTHR42734:SF9">
    <property type="entry name" value="ZINC IMPORT ATP-BINDING PROTEIN ZNUC"/>
    <property type="match status" value="1"/>
</dbReference>
<dbReference type="Pfam" id="PF00005">
    <property type="entry name" value="ABC_tran"/>
    <property type="match status" value="1"/>
</dbReference>
<dbReference type="SMART" id="SM00382">
    <property type="entry name" value="AAA"/>
    <property type="match status" value="1"/>
</dbReference>
<dbReference type="SUPFAM" id="SSF52540">
    <property type="entry name" value="P-loop containing nucleoside triphosphate hydrolases"/>
    <property type="match status" value="1"/>
</dbReference>
<dbReference type="PROSITE" id="PS00211">
    <property type="entry name" value="ABC_TRANSPORTER_1"/>
    <property type="match status" value="1"/>
</dbReference>
<dbReference type="PROSITE" id="PS50893">
    <property type="entry name" value="ABC_TRANSPORTER_2"/>
    <property type="match status" value="1"/>
</dbReference>
<dbReference type="PROSITE" id="PS51298">
    <property type="entry name" value="ZNUC"/>
    <property type="match status" value="1"/>
</dbReference>
<comment type="function">
    <text evidence="1">Part of the ABC transporter complex ZnuABC involved in zinc import. Responsible for energy coupling to the transport system.</text>
</comment>
<comment type="catalytic activity">
    <reaction evidence="1">
        <text>Zn(2+)(out) + ATP(in) + H2O(in) = Zn(2+)(in) + ADP(in) + phosphate(in) + H(+)(in)</text>
        <dbReference type="Rhea" id="RHEA:29795"/>
        <dbReference type="ChEBI" id="CHEBI:15377"/>
        <dbReference type="ChEBI" id="CHEBI:15378"/>
        <dbReference type="ChEBI" id="CHEBI:29105"/>
        <dbReference type="ChEBI" id="CHEBI:30616"/>
        <dbReference type="ChEBI" id="CHEBI:43474"/>
        <dbReference type="ChEBI" id="CHEBI:456216"/>
        <dbReference type="EC" id="7.2.2.20"/>
    </reaction>
</comment>
<comment type="subunit">
    <text evidence="1">The complex is composed of two ATP-binding proteins (ZnuC), two transmembrane proteins (ZnuB) and a solute-binding protein (ZnuA).</text>
</comment>
<comment type="subcellular location">
    <subcellularLocation>
        <location evidence="1">Cell inner membrane</location>
        <topology evidence="1">Peripheral membrane protein</topology>
    </subcellularLocation>
</comment>
<comment type="similarity">
    <text evidence="1">Belongs to the ABC transporter superfamily. Zinc importer (TC 3.A.1.15.5) family.</text>
</comment>
<keyword id="KW-0067">ATP-binding</keyword>
<keyword id="KW-0997">Cell inner membrane</keyword>
<keyword id="KW-1003">Cell membrane</keyword>
<keyword id="KW-0406">Ion transport</keyword>
<keyword id="KW-0472">Membrane</keyword>
<keyword id="KW-0547">Nucleotide-binding</keyword>
<keyword id="KW-1278">Translocase</keyword>
<keyword id="KW-0813">Transport</keyword>
<keyword id="KW-0862">Zinc</keyword>
<keyword id="KW-0864">Zinc transport</keyword>
<evidence type="ECO:0000255" key="1">
    <source>
        <dbReference type="HAMAP-Rule" id="MF_01725"/>
    </source>
</evidence>